<feature type="chain" id="PRO_0000164083" description="Superoxide dismutase [Cu-Zn]">
    <location>
        <begin position="1" status="less than"/>
        <end position="145"/>
    </location>
</feature>
<feature type="binding site" evidence="1">
    <location>
        <position position="37"/>
    </location>
    <ligand>
        <name>Cu cation</name>
        <dbReference type="ChEBI" id="CHEBI:23378"/>
        <note>catalytic</note>
    </ligand>
</feature>
<feature type="binding site" evidence="1">
    <location>
        <position position="39"/>
    </location>
    <ligand>
        <name>Cu cation</name>
        <dbReference type="ChEBI" id="CHEBI:23378"/>
        <note>catalytic</note>
    </ligand>
</feature>
<feature type="binding site" evidence="1">
    <location>
        <position position="54"/>
    </location>
    <ligand>
        <name>Cu cation</name>
        <dbReference type="ChEBI" id="CHEBI:23378"/>
        <note>catalytic</note>
    </ligand>
</feature>
<feature type="binding site" evidence="1">
    <location>
        <position position="54"/>
    </location>
    <ligand>
        <name>Zn(2+)</name>
        <dbReference type="ChEBI" id="CHEBI:29105"/>
        <note>structural</note>
    </ligand>
</feature>
<feature type="binding site" evidence="1">
    <location>
        <position position="62"/>
    </location>
    <ligand>
        <name>Zn(2+)</name>
        <dbReference type="ChEBI" id="CHEBI:29105"/>
        <note>structural</note>
    </ligand>
</feature>
<feature type="binding site" evidence="1">
    <location>
        <position position="71"/>
    </location>
    <ligand>
        <name>Zn(2+)</name>
        <dbReference type="ChEBI" id="CHEBI:29105"/>
        <note>structural</note>
    </ligand>
</feature>
<feature type="binding site" evidence="1">
    <location>
        <position position="74"/>
    </location>
    <ligand>
        <name>Zn(2+)</name>
        <dbReference type="ChEBI" id="CHEBI:29105"/>
        <note>structural</note>
    </ligand>
</feature>
<feature type="binding site" evidence="1">
    <location>
        <position position="111"/>
    </location>
    <ligand>
        <name>Cu cation</name>
        <dbReference type="ChEBI" id="CHEBI:23378"/>
        <note>catalytic</note>
    </ligand>
</feature>
<feature type="disulfide bond" evidence="1">
    <location>
        <begin position="48"/>
        <end position="137"/>
    </location>
</feature>
<feature type="non-terminal residue">
    <location>
        <position position="1"/>
    </location>
</feature>
<proteinExistence type="inferred from homology"/>
<protein>
    <recommendedName>
        <fullName evidence="2">Superoxide dismutase [Cu-Zn]</fullName>
        <ecNumber>1.15.1.1</ecNumber>
    </recommendedName>
    <alternativeName>
        <fullName evidence="2">Superoxide dismutase 1</fullName>
    </alternativeName>
</protein>
<comment type="function">
    <text>Destroys radicals which are normally produced within the cells and which are toxic to biological systems.</text>
</comment>
<comment type="catalytic activity">
    <reaction>
        <text>2 superoxide + 2 H(+) = H2O2 + O2</text>
        <dbReference type="Rhea" id="RHEA:20696"/>
        <dbReference type="ChEBI" id="CHEBI:15378"/>
        <dbReference type="ChEBI" id="CHEBI:15379"/>
        <dbReference type="ChEBI" id="CHEBI:16240"/>
        <dbReference type="ChEBI" id="CHEBI:18421"/>
        <dbReference type="EC" id="1.15.1.1"/>
    </reaction>
</comment>
<comment type="cofactor">
    <cofactor evidence="1">
        <name>Cu cation</name>
        <dbReference type="ChEBI" id="CHEBI:23378"/>
    </cofactor>
    <text evidence="1">Binds 1 copper ion per subunit.</text>
</comment>
<comment type="cofactor">
    <cofactor evidence="1">
        <name>Zn(2+)</name>
        <dbReference type="ChEBI" id="CHEBI:29105"/>
    </cofactor>
    <text evidence="1">Binds 1 zinc ion per subunit.</text>
</comment>
<comment type="subunit">
    <text evidence="1">Homodimer.</text>
</comment>
<comment type="subcellular location">
    <subcellularLocation>
        <location evidence="1">Cytoplasm</location>
    </subcellularLocation>
</comment>
<comment type="similarity">
    <text evidence="3">Belongs to the Cu-Zn superoxide dismutase family.</text>
</comment>
<organism>
    <name type="scientific">Drosophila busckii</name>
    <name type="common">Fruit fly</name>
    <dbReference type="NCBI Taxonomy" id="30019"/>
    <lineage>
        <taxon>Eukaryota</taxon>
        <taxon>Metazoa</taxon>
        <taxon>Ecdysozoa</taxon>
        <taxon>Arthropoda</taxon>
        <taxon>Hexapoda</taxon>
        <taxon>Insecta</taxon>
        <taxon>Pterygota</taxon>
        <taxon>Neoptera</taxon>
        <taxon>Endopterygota</taxon>
        <taxon>Diptera</taxon>
        <taxon>Brachycera</taxon>
        <taxon>Muscomorpha</taxon>
        <taxon>Ephydroidea</taxon>
        <taxon>Drosophilidae</taxon>
        <taxon>Drosophila</taxon>
    </lineage>
</organism>
<keyword id="KW-0049">Antioxidant</keyword>
<keyword id="KW-0186">Copper</keyword>
<keyword id="KW-0963">Cytoplasm</keyword>
<keyword id="KW-1015">Disulfide bond</keyword>
<keyword id="KW-0479">Metal-binding</keyword>
<keyword id="KW-0560">Oxidoreductase</keyword>
<keyword id="KW-0862">Zinc</keyword>
<name>SODC_DROBS</name>
<reference key="1">
    <citation type="journal article" date="1994" name="J. Mol. Evol.">
        <title>Phylogeny of Drosophila and related genera inferred from the nucleotide sequence of the Cu,Zn Sod gene.</title>
        <authorList>
            <person name="Kwiatowski J."/>
            <person name="Skarecky D."/>
            <person name="Bailey K."/>
            <person name="Ayala F.J."/>
        </authorList>
    </citation>
    <scope>NUCLEOTIDE SEQUENCE [GENOMIC DNA]</scope>
</reference>
<gene>
    <name evidence="2" type="primary">Sod1</name>
    <name evidence="2" type="synonym">Sod</name>
</gene>
<sequence>INGDAKGTVFFEQESEKCPVKVTGEVTGLAKGLHGFHVHEFGDNTNGCMSSGPHFNPQGKEHGAPTDENRHLGDLGNITATGDGPTAVDICDCKITLFGANSIIGRTVVVHADPDDLGKGGHELSKTTGNAGARIGCGVIGIAKI</sequence>
<evidence type="ECO:0000250" key="1"/>
<evidence type="ECO:0000250" key="2">
    <source>
        <dbReference type="UniProtKB" id="P61851"/>
    </source>
</evidence>
<evidence type="ECO:0000305" key="3"/>
<dbReference type="EC" id="1.15.1.1"/>
<dbReference type="EMBL" id="U39445">
    <property type="protein sequence ID" value="AAA82059.1"/>
    <property type="molecule type" value="Genomic_DNA"/>
</dbReference>
<dbReference type="SMR" id="P54407"/>
<dbReference type="EnsemblMetazoa" id="XM_017987757.2">
    <property type="protein sequence ID" value="XP_017843246.1"/>
    <property type="gene ID" value="LOC108600286"/>
</dbReference>
<dbReference type="OrthoDB" id="2015551at2759"/>
<dbReference type="GO" id="GO:0005737">
    <property type="term" value="C:cytoplasm"/>
    <property type="evidence" value="ECO:0007669"/>
    <property type="project" value="UniProtKB-SubCell"/>
</dbReference>
<dbReference type="GO" id="GO:0005507">
    <property type="term" value="F:copper ion binding"/>
    <property type="evidence" value="ECO:0007669"/>
    <property type="project" value="InterPro"/>
</dbReference>
<dbReference type="GO" id="GO:0004784">
    <property type="term" value="F:superoxide dismutase activity"/>
    <property type="evidence" value="ECO:0007669"/>
    <property type="project" value="UniProtKB-EC"/>
</dbReference>
<dbReference type="CDD" id="cd00305">
    <property type="entry name" value="Cu-Zn_Superoxide_Dismutase"/>
    <property type="match status" value="1"/>
</dbReference>
<dbReference type="FunFam" id="2.60.40.200:FF:000001">
    <property type="entry name" value="Superoxide dismutase [Cu-Zn]"/>
    <property type="match status" value="1"/>
</dbReference>
<dbReference type="Gene3D" id="2.60.40.200">
    <property type="entry name" value="Superoxide dismutase, copper/zinc binding domain"/>
    <property type="match status" value="1"/>
</dbReference>
<dbReference type="InterPro" id="IPR036423">
    <property type="entry name" value="SOD-like_Cu/Zn_dom_sf"/>
</dbReference>
<dbReference type="InterPro" id="IPR024134">
    <property type="entry name" value="SOD_Cu/Zn_/chaperone"/>
</dbReference>
<dbReference type="InterPro" id="IPR018152">
    <property type="entry name" value="SOD_Cu/Zn_BS"/>
</dbReference>
<dbReference type="InterPro" id="IPR001424">
    <property type="entry name" value="SOD_Cu_Zn_dom"/>
</dbReference>
<dbReference type="PANTHER" id="PTHR10003">
    <property type="entry name" value="SUPEROXIDE DISMUTASE CU-ZN -RELATED"/>
    <property type="match status" value="1"/>
</dbReference>
<dbReference type="Pfam" id="PF00080">
    <property type="entry name" value="Sod_Cu"/>
    <property type="match status" value="1"/>
</dbReference>
<dbReference type="PRINTS" id="PR00068">
    <property type="entry name" value="CUZNDISMTASE"/>
</dbReference>
<dbReference type="SUPFAM" id="SSF49329">
    <property type="entry name" value="Cu,Zn superoxide dismutase-like"/>
    <property type="match status" value="1"/>
</dbReference>
<dbReference type="PROSITE" id="PS00087">
    <property type="entry name" value="SOD_CU_ZN_1"/>
    <property type="match status" value="1"/>
</dbReference>
<dbReference type="PROSITE" id="PS00332">
    <property type="entry name" value="SOD_CU_ZN_2"/>
    <property type="match status" value="1"/>
</dbReference>
<accession>P54407</accession>